<evidence type="ECO:0000255" key="1">
    <source>
        <dbReference type="HAMAP-Rule" id="MF_00676"/>
    </source>
</evidence>
<comment type="similarity">
    <text evidence="1">Belongs to the UPF0260 family.</text>
</comment>
<name>YCGN_ECOL5</name>
<organism>
    <name type="scientific">Escherichia coli O6:K15:H31 (strain 536 / UPEC)</name>
    <dbReference type="NCBI Taxonomy" id="362663"/>
    <lineage>
        <taxon>Bacteria</taxon>
        <taxon>Pseudomonadati</taxon>
        <taxon>Pseudomonadota</taxon>
        <taxon>Gammaproteobacteria</taxon>
        <taxon>Enterobacterales</taxon>
        <taxon>Enterobacteriaceae</taxon>
        <taxon>Escherichia</taxon>
    </lineage>
</organism>
<sequence>MAEHLMSDVPFWQSKTLDEMSDAEWESLCDGCGQCCLHKLMDEDTDEIYFTNVACRQLNIKTCQCRNYERRFEFEPDCIKLTRENLPTFEWLPMTCAYRLLAEGKGLPAWHPLLTGSKAAMHGERISVRHIAVKESEVIDWQDHILNKPDWAQ</sequence>
<feature type="chain" id="PRO_1000044791" description="UPF0260 protein YcgN">
    <location>
        <begin position="1"/>
        <end position="153"/>
    </location>
</feature>
<accession>Q0TIJ4</accession>
<proteinExistence type="inferred from homology"/>
<reference key="1">
    <citation type="journal article" date="2006" name="Mol. Microbiol.">
        <title>Role of pathogenicity island-associated integrases in the genome plasticity of uropathogenic Escherichia coli strain 536.</title>
        <authorList>
            <person name="Hochhut B."/>
            <person name="Wilde C."/>
            <person name="Balling G."/>
            <person name="Middendorf B."/>
            <person name="Dobrindt U."/>
            <person name="Brzuszkiewicz E."/>
            <person name="Gottschalk G."/>
            <person name="Carniel E."/>
            <person name="Hacker J."/>
        </authorList>
    </citation>
    <scope>NUCLEOTIDE SEQUENCE [LARGE SCALE GENOMIC DNA]</scope>
    <source>
        <strain>536 / UPEC</strain>
    </source>
</reference>
<dbReference type="EMBL" id="CP000247">
    <property type="protein sequence ID" value="ABG69235.1"/>
    <property type="molecule type" value="Genomic_DNA"/>
</dbReference>
<dbReference type="KEGG" id="ecp:ECP_1224"/>
<dbReference type="HOGENOM" id="CLU_109769_2_0_6"/>
<dbReference type="Proteomes" id="UP000009182">
    <property type="component" value="Chromosome"/>
</dbReference>
<dbReference type="HAMAP" id="MF_00676">
    <property type="entry name" value="UPF0260"/>
    <property type="match status" value="1"/>
</dbReference>
<dbReference type="InterPro" id="IPR005358">
    <property type="entry name" value="Puta_zinc/iron-chelating_dom"/>
</dbReference>
<dbReference type="InterPro" id="IPR008228">
    <property type="entry name" value="UCP006173"/>
</dbReference>
<dbReference type="NCBIfam" id="NF003498">
    <property type="entry name" value="PRK05170.1-1"/>
    <property type="match status" value="1"/>
</dbReference>
<dbReference type="NCBIfam" id="NF003501">
    <property type="entry name" value="PRK05170.1-5"/>
    <property type="match status" value="1"/>
</dbReference>
<dbReference type="NCBIfam" id="NF003503">
    <property type="entry name" value="PRK05170.2-1"/>
    <property type="match status" value="1"/>
</dbReference>
<dbReference type="NCBIfam" id="NF003507">
    <property type="entry name" value="PRK05170.2-5"/>
    <property type="match status" value="1"/>
</dbReference>
<dbReference type="PANTHER" id="PTHR37421">
    <property type="entry name" value="UPF0260 PROTEIN YCGN"/>
    <property type="match status" value="1"/>
</dbReference>
<dbReference type="PANTHER" id="PTHR37421:SF1">
    <property type="entry name" value="UPF0260 PROTEIN YCGN"/>
    <property type="match status" value="1"/>
</dbReference>
<dbReference type="Pfam" id="PF03692">
    <property type="entry name" value="CxxCxxCC"/>
    <property type="match status" value="1"/>
</dbReference>
<dbReference type="PIRSF" id="PIRSF006173">
    <property type="entry name" value="UCP006173"/>
    <property type="match status" value="1"/>
</dbReference>
<protein>
    <recommendedName>
        <fullName evidence="1">UPF0260 protein YcgN</fullName>
    </recommendedName>
</protein>
<gene>
    <name evidence="1" type="primary">ycgN</name>
    <name type="ordered locus">ECP_1224</name>
</gene>